<proteinExistence type="inferred from homology"/>
<keyword id="KW-0004">4Fe-4S</keyword>
<keyword id="KW-0408">Iron</keyword>
<keyword id="KW-0411">Iron-sulfur</keyword>
<keyword id="KW-0479">Metal-binding</keyword>
<keyword id="KW-1185">Reference proteome</keyword>
<sequence>MITITDAAQSHFAKLLANQEEGTQIRVFVINPGTPTAECGVSYCPPDAVEATDTELKFEQLSAYVDELSVPYLQDAEIDFVTDQLGSQLTLKAPNAKMRKVDDSAPLMERVEYVLQSQINPQLAGHGGRVTLMEITPEGLAILQFGGGCNGCSMVDVTLKEGIEKELLQKFPELKGVRDLTEHQRGEHSYY</sequence>
<reference key="1">
    <citation type="journal article" date="2001" name="Nature">
        <title>Genome sequence of Yersinia pestis, the causative agent of plague.</title>
        <authorList>
            <person name="Parkhill J."/>
            <person name="Wren B.W."/>
            <person name="Thomson N.R."/>
            <person name="Titball R.W."/>
            <person name="Holden M.T.G."/>
            <person name="Prentice M.B."/>
            <person name="Sebaihia M."/>
            <person name="James K.D."/>
            <person name="Churcher C.M."/>
            <person name="Mungall K.L."/>
            <person name="Baker S."/>
            <person name="Basham D."/>
            <person name="Bentley S.D."/>
            <person name="Brooks K."/>
            <person name="Cerdeno-Tarraga A.-M."/>
            <person name="Chillingworth T."/>
            <person name="Cronin A."/>
            <person name="Davies R.M."/>
            <person name="Davis P."/>
            <person name="Dougan G."/>
            <person name="Feltwell T."/>
            <person name="Hamlin N."/>
            <person name="Holroyd S."/>
            <person name="Jagels K."/>
            <person name="Karlyshev A.V."/>
            <person name="Leather S."/>
            <person name="Moule S."/>
            <person name="Oyston P.C.F."/>
            <person name="Quail M.A."/>
            <person name="Rutherford K.M."/>
            <person name="Simmonds M."/>
            <person name="Skelton J."/>
            <person name="Stevens K."/>
            <person name="Whitehead S."/>
            <person name="Barrell B.G."/>
        </authorList>
    </citation>
    <scope>NUCLEOTIDE SEQUENCE [LARGE SCALE GENOMIC DNA]</scope>
    <source>
        <strain>CO-92 / Biovar Orientalis</strain>
    </source>
</reference>
<reference key="2">
    <citation type="journal article" date="2002" name="J. Bacteriol.">
        <title>Genome sequence of Yersinia pestis KIM.</title>
        <authorList>
            <person name="Deng W."/>
            <person name="Burland V."/>
            <person name="Plunkett G. III"/>
            <person name="Boutin A."/>
            <person name="Mayhew G.F."/>
            <person name="Liss P."/>
            <person name="Perna N.T."/>
            <person name="Rose D.J."/>
            <person name="Mau B."/>
            <person name="Zhou S."/>
            <person name="Schwartz D.C."/>
            <person name="Fetherston J.D."/>
            <person name="Lindler L.E."/>
            <person name="Brubaker R.R."/>
            <person name="Plano G.V."/>
            <person name="Straley S.C."/>
            <person name="McDonough K.A."/>
            <person name="Nilles M.L."/>
            <person name="Matson J.S."/>
            <person name="Blattner F.R."/>
            <person name="Perry R.D."/>
        </authorList>
    </citation>
    <scope>NUCLEOTIDE SEQUENCE [LARGE SCALE GENOMIC DNA]</scope>
    <source>
        <strain>KIM10+ / Biovar Mediaevalis</strain>
    </source>
</reference>
<reference key="3">
    <citation type="journal article" date="2004" name="DNA Res.">
        <title>Complete genome sequence of Yersinia pestis strain 91001, an isolate avirulent to humans.</title>
        <authorList>
            <person name="Song Y."/>
            <person name="Tong Z."/>
            <person name="Wang J."/>
            <person name="Wang L."/>
            <person name="Guo Z."/>
            <person name="Han Y."/>
            <person name="Zhang J."/>
            <person name="Pei D."/>
            <person name="Zhou D."/>
            <person name="Qin H."/>
            <person name="Pang X."/>
            <person name="Han Y."/>
            <person name="Zhai J."/>
            <person name="Li M."/>
            <person name="Cui B."/>
            <person name="Qi Z."/>
            <person name="Jin L."/>
            <person name="Dai R."/>
            <person name="Chen F."/>
            <person name="Li S."/>
            <person name="Ye C."/>
            <person name="Du Z."/>
            <person name="Lin W."/>
            <person name="Wang J."/>
            <person name="Yu J."/>
            <person name="Yang H."/>
            <person name="Wang J."/>
            <person name="Huang P."/>
            <person name="Yang R."/>
        </authorList>
    </citation>
    <scope>NUCLEOTIDE SEQUENCE [LARGE SCALE GENOMIC DNA]</scope>
    <source>
        <strain>91001 / Biovar Mediaevalis</strain>
    </source>
</reference>
<protein>
    <recommendedName>
        <fullName evidence="1">Fe/S biogenesis protein NfuA</fullName>
    </recommendedName>
</protein>
<gene>
    <name evidence="1" type="primary">nfuA</name>
    <name type="ordered locus">YPO0127</name>
    <name type="ordered locus">y3903</name>
    <name type="ordered locus">YP_0128</name>
</gene>
<organism>
    <name type="scientific">Yersinia pestis</name>
    <dbReference type="NCBI Taxonomy" id="632"/>
    <lineage>
        <taxon>Bacteria</taxon>
        <taxon>Pseudomonadati</taxon>
        <taxon>Pseudomonadota</taxon>
        <taxon>Gammaproteobacteria</taxon>
        <taxon>Enterobacterales</taxon>
        <taxon>Yersiniaceae</taxon>
        <taxon>Yersinia</taxon>
    </lineage>
</organism>
<evidence type="ECO:0000255" key="1">
    <source>
        <dbReference type="HAMAP-Rule" id="MF_01637"/>
    </source>
</evidence>
<feature type="chain" id="PRO_0000209494" description="Fe/S biogenesis protein NfuA">
    <location>
        <begin position="1"/>
        <end position="191"/>
    </location>
</feature>
<feature type="binding site" evidence="1">
    <location>
        <position position="149"/>
    </location>
    <ligand>
        <name>[4Fe-4S] cluster</name>
        <dbReference type="ChEBI" id="CHEBI:49883"/>
    </ligand>
</feature>
<feature type="binding site" evidence="1">
    <location>
        <position position="152"/>
    </location>
    <ligand>
        <name>[4Fe-4S] cluster</name>
        <dbReference type="ChEBI" id="CHEBI:49883"/>
    </ligand>
</feature>
<accession>Q8ZJI0</accession>
<accession>Q0WKH5</accession>
<accession>Q74Y47</accession>
<accession>Q7CFX3</accession>
<name>NFUA_YERPE</name>
<dbReference type="EMBL" id="AL590842">
    <property type="protein sequence ID" value="CAL18813.1"/>
    <property type="molecule type" value="Genomic_DNA"/>
</dbReference>
<dbReference type="EMBL" id="AE009952">
    <property type="protein sequence ID" value="AAM87447.1"/>
    <property type="molecule type" value="Genomic_DNA"/>
</dbReference>
<dbReference type="EMBL" id="AE017042">
    <property type="protein sequence ID" value="AAS60406.1"/>
    <property type="molecule type" value="Genomic_DNA"/>
</dbReference>
<dbReference type="PIR" id="AD0016">
    <property type="entry name" value="AD0016"/>
</dbReference>
<dbReference type="RefSeq" id="WP_002208924.1">
    <property type="nucleotide sequence ID" value="NZ_WUCM01000004.1"/>
</dbReference>
<dbReference type="RefSeq" id="YP_002345213.1">
    <property type="nucleotide sequence ID" value="NC_003143.1"/>
</dbReference>
<dbReference type="SMR" id="Q8ZJI0"/>
<dbReference type="STRING" id="214092.YPO0127"/>
<dbReference type="PaxDb" id="214092-YPO0127"/>
<dbReference type="DNASU" id="1148850"/>
<dbReference type="EnsemblBacteria" id="AAS60406">
    <property type="protein sequence ID" value="AAS60406"/>
    <property type="gene ID" value="YP_0128"/>
</dbReference>
<dbReference type="GeneID" id="57974473"/>
<dbReference type="KEGG" id="ype:YPO0127"/>
<dbReference type="KEGG" id="ypk:y3903"/>
<dbReference type="KEGG" id="ypm:YP_0128"/>
<dbReference type="PATRIC" id="fig|214092.21.peg.353"/>
<dbReference type="eggNOG" id="COG0316">
    <property type="taxonomic scope" value="Bacteria"/>
</dbReference>
<dbReference type="eggNOG" id="COG0694">
    <property type="taxonomic scope" value="Bacteria"/>
</dbReference>
<dbReference type="HOGENOM" id="CLU_094569_0_0_6"/>
<dbReference type="OMA" id="CLAYCRP"/>
<dbReference type="OrthoDB" id="9785450at2"/>
<dbReference type="Proteomes" id="UP000000815">
    <property type="component" value="Chromosome"/>
</dbReference>
<dbReference type="Proteomes" id="UP000001019">
    <property type="component" value="Chromosome"/>
</dbReference>
<dbReference type="Proteomes" id="UP000002490">
    <property type="component" value="Chromosome"/>
</dbReference>
<dbReference type="GO" id="GO:0051539">
    <property type="term" value="F:4 iron, 4 sulfur cluster binding"/>
    <property type="evidence" value="ECO:0000318"/>
    <property type="project" value="GO_Central"/>
</dbReference>
<dbReference type="GO" id="GO:0005506">
    <property type="term" value="F:iron ion binding"/>
    <property type="evidence" value="ECO:0007669"/>
    <property type="project" value="InterPro"/>
</dbReference>
<dbReference type="GO" id="GO:0016226">
    <property type="term" value="P:iron-sulfur cluster assembly"/>
    <property type="evidence" value="ECO:0007669"/>
    <property type="project" value="UniProtKB-UniRule"/>
</dbReference>
<dbReference type="GO" id="GO:0051604">
    <property type="term" value="P:protein maturation"/>
    <property type="evidence" value="ECO:0007669"/>
    <property type="project" value="UniProtKB-UniRule"/>
</dbReference>
<dbReference type="Gene3D" id="3.30.300.130">
    <property type="entry name" value="Fe-S cluster assembly (FSCA)"/>
    <property type="match status" value="1"/>
</dbReference>
<dbReference type="Gene3D" id="2.60.300.12">
    <property type="entry name" value="HesB-like domain"/>
    <property type="match status" value="1"/>
</dbReference>
<dbReference type="HAMAP" id="MF_01637">
    <property type="entry name" value="Fe_S_biogen_NfuA"/>
    <property type="match status" value="1"/>
</dbReference>
<dbReference type="InterPro" id="IPR017726">
    <property type="entry name" value="Fe/S_biogenesis_protein_NfuA"/>
</dbReference>
<dbReference type="InterPro" id="IPR000361">
    <property type="entry name" value="FeS_biogenesis"/>
</dbReference>
<dbReference type="InterPro" id="IPR034904">
    <property type="entry name" value="FSCA_dom_sf"/>
</dbReference>
<dbReference type="InterPro" id="IPR035903">
    <property type="entry name" value="HesB-like_dom_sf"/>
</dbReference>
<dbReference type="InterPro" id="IPR001075">
    <property type="entry name" value="NIF_FeS_clus_asmbl_NifU_C"/>
</dbReference>
<dbReference type="NCBIfam" id="NF008392">
    <property type="entry name" value="PRK11190.1"/>
    <property type="match status" value="1"/>
</dbReference>
<dbReference type="NCBIfam" id="TIGR03341">
    <property type="entry name" value="YhgI_GntY"/>
    <property type="match status" value="1"/>
</dbReference>
<dbReference type="PANTHER" id="PTHR11178:SF51">
    <property type="entry name" value="FE_S BIOGENESIS PROTEIN NFUA"/>
    <property type="match status" value="1"/>
</dbReference>
<dbReference type="PANTHER" id="PTHR11178">
    <property type="entry name" value="IRON-SULFUR CLUSTER SCAFFOLD PROTEIN NFU-RELATED"/>
    <property type="match status" value="1"/>
</dbReference>
<dbReference type="Pfam" id="PF01521">
    <property type="entry name" value="Fe-S_biosyn"/>
    <property type="match status" value="1"/>
</dbReference>
<dbReference type="Pfam" id="PF01106">
    <property type="entry name" value="NifU"/>
    <property type="match status" value="1"/>
</dbReference>
<dbReference type="SUPFAM" id="SSF117916">
    <property type="entry name" value="Fe-S cluster assembly (FSCA) domain-like"/>
    <property type="match status" value="1"/>
</dbReference>
<dbReference type="SUPFAM" id="SSF89360">
    <property type="entry name" value="HesB-like domain"/>
    <property type="match status" value="1"/>
</dbReference>
<comment type="function">
    <text evidence="1">Involved in iron-sulfur cluster biogenesis. Binds a 4Fe-4S cluster, can transfer this cluster to apoproteins, and thereby intervenes in the maturation of Fe/S proteins. Could also act as a scaffold/chaperone for damaged Fe/S proteins.</text>
</comment>
<comment type="cofactor">
    <cofactor evidence="1">
        <name>[4Fe-4S] cluster</name>
        <dbReference type="ChEBI" id="CHEBI:49883"/>
    </cofactor>
    <text evidence="1">Binds 1 [4Fe-4S] cluster per subunit. The cluster is presumably bound at the interface of two monomers.</text>
</comment>
<comment type="subunit">
    <text evidence="1">Homodimer.</text>
</comment>
<comment type="similarity">
    <text evidence="1">Belongs to the NfuA family.</text>
</comment>